<organism>
    <name type="scientific">Aspergillus niger</name>
    <dbReference type="NCBI Taxonomy" id="5061"/>
    <lineage>
        <taxon>Eukaryota</taxon>
        <taxon>Fungi</taxon>
        <taxon>Dikarya</taxon>
        <taxon>Ascomycota</taxon>
        <taxon>Pezizomycotina</taxon>
        <taxon>Eurotiomycetes</taxon>
        <taxon>Eurotiomycetidae</taxon>
        <taxon>Eurotiales</taxon>
        <taxon>Aspergillaceae</taxon>
        <taxon>Aspergillus</taxon>
        <taxon>Aspergillus subgen. Circumdati</taxon>
    </lineage>
</organism>
<keyword id="KW-0903">Direct protein sequencing</keyword>
<keyword id="KW-0325">Glycoprotein</keyword>
<keyword id="KW-0326">Glycosidase</keyword>
<keyword id="KW-0378">Hydrolase</keyword>
<keyword id="KW-0732">Signal</keyword>
<feature type="signal peptide" evidence="2">
    <location>
        <begin position="1"/>
        <end position="18"/>
    </location>
</feature>
<feature type="chain" id="PRO_0000012223" description="Alpha-L-arabinofuranosidase B">
    <location>
        <begin position="19"/>
        <end position="499"/>
    </location>
</feature>
<feature type="glycosylation site" description="N-linked (GlcNAc...) asparagine" evidence="1">
    <location>
        <position position="83"/>
    </location>
</feature>
<feature type="glycosylation site" description="N-linked (GlcNAc...) asparagine" evidence="1">
    <location>
        <position position="202"/>
    </location>
</feature>
<dbReference type="EC" id="3.2.1.55"/>
<dbReference type="EMBL" id="L23502">
    <property type="protein sequence ID" value="AAB53944.1"/>
    <property type="molecule type" value="Genomic_DNA"/>
</dbReference>
<dbReference type="PIR" id="S39113">
    <property type="entry name" value="S39113"/>
</dbReference>
<dbReference type="SMR" id="P42255"/>
<dbReference type="CAZy" id="CBM42">
    <property type="family name" value="Carbohydrate-Binding Module Family 42"/>
</dbReference>
<dbReference type="CAZy" id="GH54">
    <property type="family name" value="Glycoside Hydrolase Family 54"/>
</dbReference>
<dbReference type="GlyCosmos" id="P42255">
    <property type="glycosylation" value="2 sites, No reported glycans"/>
</dbReference>
<dbReference type="PaxDb" id="5061-CADANGAP00011686"/>
<dbReference type="VEuPathDB" id="FungiDB:An15g02300"/>
<dbReference type="VEuPathDB" id="FungiDB:ASPNIDRAFT2_1183516"/>
<dbReference type="VEuPathDB" id="FungiDB:ATCC64974_30860"/>
<dbReference type="VEuPathDB" id="FungiDB:M747DRAFT_364642"/>
<dbReference type="eggNOG" id="ENOG502QS3Q">
    <property type="taxonomic scope" value="Eukaryota"/>
</dbReference>
<dbReference type="UniPathway" id="UPA00667"/>
<dbReference type="GO" id="GO:0046556">
    <property type="term" value="F:alpha-L-arabinofuranosidase activity"/>
    <property type="evidence" value="ECO:0007669"/>
    <property type="project" value="UniProtKB-EC"/>
</dbReference>
<dbReference type="GO" id="GO:0031222">
    <property type="term" value="P:arabinan catabolic process"/>
    <property type="evidence" value="ECO:0007669"/>
    <property type="project" value="UniProtKB-UniPathway"/>
</dbReference>
<dbReference type="GO" id="GO:0046373">
    <property type="term" value="P:L-arabinose metabolic process"/>
    <property type="evidence" value="ECO:0007669"/>
    <property type="project" value="InterPro"/>
</dbReference>
<dbReference type="GO" id="GO:0045490">
    <property type="term" value="P:pectin catabolic process"/>
    <property type="evidence" value="ECO:0007669"/>
    <property type="project" value="TreeGrafter"/>
</dbReference>
<dbReference type="CDD" id="cd23399">
    <property type="entry name" value="beta-trefoil_ABD_ABFB"/>
    <property type="match status" value="1"/>
</dbReference>
<dbReference type="FunFam" id="2.60.120.200:FF:000131">
    <property type="entry name" value="Probable alpha-L-arabinofuranosidase B"/>
    <property type="match status" value="1"/>
</dbReference>
<dbReference type="FunFam" id="2.80.10.50:FF:000059">
    <property type="entry name" value="Probable alpha-L-arabinofuranosidase B"/>
    <property type="match status" value="1"/>
</dbReference>
<dbReference type="Gene3D" id="2.60.120.200">
    <property type="match status" value="1"/>
</dbReference>
<dbReference type="Gene3D" id="2.80.10.50">
    <property type="match status" value="1"/>
</dbReference>
<dbReference type="InterPro" id="IPR015289">
    <property type="entry name" value="A-L-arabinofuranosidase_B_cat"/>
</dbReference>
<dbReference type="InterPro" id="IPR038964">
    <property type="entry name" value="ABFB"/>
</dbReference>
<dbReference type="InterPro" id="IPR007934">
    <property type="entry name" value="AbfB_ABD"/>
</dbReference>
<dbReference type="InterPro" id="IPR036195">
    <property type="entry name" value="AbfB_ABD_sf"/>
</dbReference>
<dbReference type="InterPro" id="IPR013320">
    <property type="entry name" value="ConA-like_dom_sf"/>
</dbReference>
<dbReference type="PANTHER" id="PTHR39447">
    <property type="entry name" value="ALPHA-L-ARABINOFURANOSIDASE B"/>
    <property type="match status" value="1"/>
</dbReference>
<dbReference type="PANTHER" id="PTHR39447:SF2">
    <property type="entry name" value="ALPHA-L-ARABINOFURANOSIDASE B"/>
    <property type="match status" value="1"/>
</dbReference>
<dbReference type="Pfam" id="PF05270">
    <property type="entry name" value="AbfB"/>
    <property type="match status" value="1"/>
</dbReference>
<dbReference type="Pfam" id="PF09206">
    <property type="entry name" value="ArabFuran-catal"/>
    <property type="match status" value="1"/>
</dbReference>
<dbReference type="SUPFAM" id="SSF110221">
    <property type="entry name" value="AbfB domain"/>
    <property type="match status" value="1"/>
</dbReference>
<dbReference type="SUPFAM" id="SSF49899">
    <property type="entry name" value="Concanavalin A-like lectins/glucanases"/>
    <property type="match status" value="1"/>
</dbReference>
<gene>
    <name type="primary">abfB</name>
</gene>
<name>ABFB_ASPNG</name>
<evidence type="ECO:0000255" key="1"/>
<evidence type="ECO:0000269" key="2">
    <source>
    </source>
</evidence>
<evidence type="ECO:0000305" key="3"/>
<accession>P42255</accession>
<comment type="function">
    <text>Able to hydrolyze 1,5-, 1,3- and 1,2-alpha-linkages not only in L-arabinofuranosyl oligosaccharides, but also in polysac-charides containing terminal non-reducing L-arabinofuranoses in side chains, like L-arabinan, arabinogalactan and arabinoxylan.</text>
</comment>
<comment type="catalytic activity">
    <reaction>
        <text>Hydrolysis of terminal non-reducing alpha-L-arabinofuranoside residues in alpha-L-arabinosides.</text>
        <dbReference type="EC" id="3.2.1.55"/>
    </reaction>
</comment>
<comment type="pathway">
    <text>Glycan metabolism; L-arabinan degradation.</text>
</comment>
<comment type="induction">
    <text>By growth on polymeric substrates and L-arabitol.</text>
</comment>
<comment type="similarity">
    <text evidence="3">Belongs to the glycosyl hydrolase 54 family.</text>
</comment>
<reference key="1">
    <citation type="journal article" date="1993" name="Curr. Genet.">
        <title>Cloning and characterization of the abfB gene coding for the major alpha-L-arabinofuranosidase (ABF B) of Aspergillus niger.</title>
        <authorList>
            <person name="Flipphi M.J.A."/>
            <person name="van Heuvel M."/>
            <person name="van der Veen P."/>
            <person name="Visser J."/>
            <person name="de Graaff L.H."/>
        </authorList>
    </citation>
    <scope>NUCLEOTIDE SEQUENCE [GENOMIC DNA]</scope>
    <scope>PROTEIN SEQUENCE OF 19-30; 221-234; 285-304 AND 312-324</scope>
    <source>
        <strain>ATCC 9029 / NRRL 3 / CBS 120.49 / DSM 2466 / N400 / FGSC 732</strain>
    </source>
</reference>
<proteinExistence type="evidence at protein level"/>
<sequence>MFSRRNLVALGLAATVSAGPCDIYEAGDTPCVAAHSTTRALYSSFSGALYQLQRGSDDTTTTISPLTAGGVADASAQDTFCANTTCLITIIYDQSGNGNHLTQAPPGGFDGPDVDGYDNLASAIGAPVTLNGQKAYGVFMSPGTGYRNNEATGTATGDEPEGMYAVLDGTHYNDACCFDYGNAETSSTDTGAGHMEAIYLGNSTTWGYGAGDGPWIMVDMENNLFSGADEGYNSGDPSISYSFVTAAVKGGADKWAIRGGNAASGSLSTYYSGARPDYSGYNPMSKEGAIILGIGGDNSNGAQGTFYEGVMTSGYPSDDVENSVQENIVAAKYVSGSLVSGPSFTSGEVVSLRVTTPGYTTRYIAHTDTTVNTQVVDDDSSTTLKEEASWTVVTGLANSQCFSFESVDTPGSYIRHYNFELLLNANDGTKQFHEDATFCPQAPLNGEGTSLRSWSYPTRYFRHYENVLYAASNGGVQTFDSKTSFNNDVSFEIETAFAS</sequence>
<protein>
    <recommendedName>
        <fullName>Alpha-L-arabinofuranosidase B</fullName>
        <shortName>ABF B</shortName>
        <shortName>Arabinosidase B</shortName>
        <ecNumber>3.2.1.55</ecNumber>
    </recommendedName>
</protein>